<reference key="1">
    <citation type="journal article" date="1999" name="Nature">
        <title>Sequence and analysis of chromosome 2 of the plant Arabidopsis thaliana.</title>
        <authorList>
            <person name="Lin X."/>
            <person name="Kaul S."/>
            <person name="Rounsley S.D."/>
            <person name="Shea T.P."/>
            <person name="Benito M.-I."/>
            <person name="Town C.D."/>
            <person name="Fujii C.Y."/>
            <person name="Mason T.M."/>
            <person name="Bowman C.L."/>
            <person name="Barnstead M.E."/>
            <person name="Feldblyum T.V."/>
            <person name="Buell C.R."/>
            <person name="Ketchum K.A."/>
            <person name="Lee J.J."/>
            <person name="Ronning C.M."/>
            <person name="Koo H.L."/>
            <person name="Moffat K.S."/>
            <person name="Cronin L.A."/>
            <person name="Shen M."/>
            <person name="Pai G."/>
            <person name="Van Aken S."/>
            <person name="Umayam L."/>
            <person name="Tallon L.J."/>
            <person name="Gill J.E."/>
            <person name="Adams M.D."/>
            <person name="Carrera A.J."/>
            <person name="Creasy T.H."/>
            <person name="Goodman H.M."/>
            <person name="Somerville C.R."/>
            <person name="Copenhaver G.P."/>
            <person name="Preuss D."/>
            <person name="Nierman W.C."/>
            <person name="White O."/>
            <person name="Eisen J.A."/>
            <person name="Salzberg S.L."/>
            <person name="Fraser C.M."/>
            <person name="Venter J.C."/>
        </authorList>
    </citation>
    <scope>NUCLEOTIDE SEQUENCE [LARGE SCALE GENOMIC DNA]</scope>
    <source>
        <strain>cv. Columbia</strain>
    </source>
</reference>
<reference key="2">
    <citation type="journal article" date="2017" name="Plant J.">
        <title>Araport11: a complete reannotation of the Arabidopsis thaliana reference genome.</title>
        <authorList>
            <person name="Cheng C.Y."/>
            <person name="Krishnakumar V."/>
            <person name="Chan A.P."/>
            <person name="Thibaud-Nissen F."/>
            <person name="Schobel S."/>
            <person name="Town C.D."/>
        </authorList>
    </citation>
    <scope>GENOME REANNOTATION</scope>
    <source>
        <strain>cv. Columbia</strain>
    </source>
</reference>
<reference key="3">
    <citation type="journal article" date="2003" name="Science">
        <title>Empirical analysis of transcriptional activity in the Arabidopsis genome.</title>
        <authorList>
            <person name="Yamada K."/>
            <person name="Lim J."/>
            <person name="Dale J.M."/>
            <person name="Chen H."/>
            <person name="Shinn P."/>
            <person name="Palm C.J."/>
            <person name="Southwick A.M."/>
            <person name="Wu H.C."/>
            <person name="Kim C.J."/>
            <person name="Nguyen M."/>
            <person name="Pham P.K."/>
            <person name="Cheuk R.F."/>
            <person name="Karlin-Newmann G."/>
            <person name="Liu S.X."/>
            <person name="Lam B."/>
            <person name="Sakano H."/>
            <person name="Wu T."/>
            <person name="Yu G."/>
            <person name="Miranda M."/>
            <person name="Quach H.L."/>
            <person name="Tripp M."/>
            <person name="Chang C.H."/>
            <person name="Lee J.M."/>
            <person name="Toriumi M.J."/>
            <person name="Chan M.M."/>
            <person name="Tang C.C."/>
            <person name="Onodera C.S."/>
            <person name="Deng J.M."/>
            <person name="Akiyama K."/>
            <person name="Ansari Y."/>
            <person name="Arakawa T."/>
            <person name="Banh J."/>
            <person name="Banno F."/>
            <person name="Bowser L."/>
            <person name="Brooks S.Y."/>
            <person name="Carninci P."/>
            <person name="Chao Q."/>
            <person name="Choy N."/>
            <person name="Enju A."/>
            <person name="Goldsmith A.D."/>
            <person name="Gurjal M."/>
            <person name="Hansen N.F."/>
            <person name="Hayashizaki Y."/>
            <person name="Johnson-Hopson C."/>
            <person name="Hsuan V.W."/>
            <person name="Iida K."/>
            <person name="Karnes M."/>
            <person name="Khan S."/>
            <person name="Koesema E."/>
            <person name="Ishida J."/>
            <person name="Jiang P.X."/>
            <person name="Jones T."/>
            <person name="Kawai J."/>
            <person name="Kamiya A."/>
            <person name="Meyers C."/>
            <person name="Nakajima M."/>
            <person name="Narusaka M."/>
            <person name="Seki M."/>
            <person name="Sakurai T."/>
            <person name="Satou M."/>
            <person name="Tamse R."/>
            <person name="Vaysberg M."/>
            <person name="Wallender E.K."/>
            <person name="Wong C."/>
            <person name="Yamamura Y."/>
            <person name="Yuan S."/>
            <person name="Shinozaki K."/>
            <person name="Davis R.W."/>
            <person name="Theologis A."/>
            <person name="Ecker J.R."/>
        </authorList>
    </citation>
    <scope>NUCLEOTIDE SEQUENCE [LARGE SCALE MRNA]</scope>
    <source>
        <strain>cv. Columbia</strain>
    </source>
</reference>
<reference key="4">
    <citation type="submission" date="2006-07" db="EMBL/GenBank/DDBJ databases">
        <title>Large-scale analysis of RIKEN Arabidopsis full-length (RAFL) cDNAs.</title>
        <authorList>
            <person name="Totoki Y."/>
            <person name="Seki M."/>
            <person name="Ishida J."/>
            <person name="Nakajima M."/>
            <person name="Enju A."/>
            <person name="Kamiya A."/>
            <person name="Narusaka M."/>
            <person name="Shin-i T."/>
            <person name="Nakagawa M."/>
            <person name="Sakamoto N."/>
            <person name="Oishi K."/>
            <person name="Kohara Y."/>
            <person name="Kobayashi M."/>
            <person name="Toyoda A."/>
            <person name="Sakaki Y."/>
            <person name="Sakurai T."/>
            <person name="Iida K."/>
            <person name="Akiyama K."/>
            <person name="Satou M."/>
            <person name="Toyoda T."/>
            <person name="Konagaya A."/>
            <person name="Carninci P."/>
            <person name="Kawai J."/>
            <person name="Hayashizaki Y."/>
            <person name="Shinozaki K."/>
        </authorList>
    </citation>
    <scope>NUCLEOTIDE SEQUENCE [LARGE SCALE MRNA]</scope>
    <source>
        <strain>cv. Columbia</strain>
    </source>
</reference>
<reference key="5">
    <citation type="journal article" date="2002" name="Plant Mol. Biol.">
        <title>Auxin-responsive gene expression: genes, promoters and regulatory factors.</title>
        <authorList>
            <person name="Hagen G."/>
            <person name="Guilfoyle T.J."/>
        </authorList>
    </citation>
    <scope>GENE FAMILY</scope>
    <scope>NOMENCLATURE</scope>
</reference>
<reference key="6">
    <citation type="journal article" date="2007" name="Plant Sci.">
        <title>Functional characterization of a small auxin-up RNA gene in apical hook development in Arabidopsis.</title>
        <authorList>
            <person name="Park J.E."/>
            <person name="Kim Y.S."/>
            <person name="Yoon H.K."/>
            <person name="Park C.M."/>
        </authorList>
    </citation>
    <scope>FUNCTION</scope>
    <scope>SUBCELLULAR LOCATION</scope>
    <scope>TISSUE SPECIFICITY</scope>
    <scope>DEVELOPMENTAL STAGE</scope>
    <scope>DISRUPTION PHENOTYPE</scope>
</reference>
<sequence length="121" mass="13950">MGTGEKTLKSFQLHRKQSVKVKDVPKGCLAIKVGSQGEEQQRFIVPVLYFNHPLFMQLLKEAEDEYGFDQKGTITIPCHVEEFRYVQALIDGERSVYNGNNHHHRHGGRDQYHHLVGCFRA</sequence>
<dbReference type="EMBL" id="AC005819">
    <property type="protein sequence ID" value="AAC69926.1"/>
    <property type="molecule type" value="Genomic_DNA"/>
</dbReference>
<dbReference type="EMBL" id="CP002685">
    <property type="protein sequence ID" value="AEC10741.1"/>
    <property type="molecule type" value="Genomic_DNA"/>
</dbReference>
<dbReference type="EMBL" id="BT005204">
    <property type="protein sequence ID" value="AAO63268.1"/>
    <property type="molecule type" value="mRNA"/>
</dbReference>
<dbReference type="EMBL" id="AK228052">
    <property type="protein sequence ID" value="BAF00013.1"/>
    <property type="molecule type" value="mRNA"/>
</dbReference>
<dbReference type="PIR" id="A84906">
    <property type="entry name" value="A84906"/>
</dbReference>
<dbReference type="RefSeq" id="NP_182192.1">
    <property type="nucleotide sequence ID" value="NM_130234.4"/>
</dbReference>
<dbReference type="FunCoup" id="Q9ZUZ3">
    <property type="interactions" value="418"/>
</dbReference>
<dbReference type="IntAct" id="Q9ZUZ3">
    <property type="interactions" value="2"/>
</dbReference>
<dbReference type="STRING" id="3702.Q9ZUZ3"/>
<dbReference type="PaxDb" id="3702-AT2G46690.1"/>
<dbReference type="ProteomicsDB" id="232732"/>
<dbReference type="DNASU" id="819281"/>
<dbReference type="EnsemblPlants" id="AT2G46690.1">
    <property type="protein sequence ID" value="AT2G46690.1"/>
    <property type="gene ID" value="AT2G46690"/>
</dbReference>
<dbReference type="GeneID" id="819281"/>
<dbReference type="Gramene" id="AT2G46690.1">
    <property type="protein sequence ID" value="AT2G46690.1"/>
    <property type="gene ID" value="AT2G46690"/>
</dbReference>
<dbReference type="KEGG" id="ath:AT2G46690"/>
<dbReference type="Araport" id="AT2G46690"/>
<dbReference type="TAIR" id="AT2G46690">
    <property type="gene designation" value="SAUR32"/>
</dbReference>
<dbReference type="eggNOG" id="ENOG502S2B3">
    <property type="taxonomic scope" value="Eukaryota"/>
</dbReference>
<dbReference type="HOGENOM" id="CLU_098106_4_1_1"/>
<dbReference type="InParanoid" id="Q9ZUZ3"/>
<dbReference type="OMA" id="GGRDQYH"/>
<dbReference type="OrthoDB" id="1026046at2759"/>
<dbReference type="PhylomeDB" id="Q9ZUZ3"/>
<dbReference type="PRO" id="PR:Q9ZUZ3"/>
<dbReference type="Proteomes" id="UP000006548">
    <property type="component" value="Chromosome 2"/>
</dbReference>
<dbReference type="ExpressionAtlas" id="Q9ZUZ3">
    <property type="expression patterns" value="baseline and differential"/>
</dbReference>
<dbReference type="GO" id="GO:0005737">
    <property type="term" value="C:cytoplasm"/>
    <property type="evidence" value="ECO:0000314"/>
    <property type="project" value="UniProtKB"/>
</dbReference>
<dbReference type="GO" id="GO:0005634">
    <property type="term" value="C:nucleus"/>
    <property type="evidence" value="ECO:0000314"/>
    <property type="project" value="UniProtKB"/>
</dbReference>
<dbReference type="GO" id="GO:0005886">
    <property type="term" value="C:plasma membrane"/>
    <property type="evidence" value="ECO:0000314"/>
    <property type="project" value="TAIR"/>
</dbReference>
<dbReference type="GO" id="GO:0009734">
    <property type="term" value="P:auxin-activated signaling pathway"/>
    <property type="evidence" value="ECO:0007669"/>
    <property type="project" value="UniProtKB-KW"/>
</dbReference>
<dbReference type="GO" id="GO:1900140">
    <property type="term" value="P:regulation of seedling development"/>
    <property type="evidence" value="ECO:0000315"/>
    <property type="project" value="UniProtKB"/>
</dbReference>
<dbReference type="InterPro" id="IPR003676">
    <property type="entry name" value="SAUR_fam"/>
</dbReference>
<dbReference type="PANTHER" id="PTHR31374">
    <property type="entry name" value="AUXIN-INDUCED PROTEIN-LIKE-RELATED"/>
    <property type="match status" value="1"/>
</dbReference>
<dbReference type="PANTHER" id="PTHR31374:SF414">
    <property type="entry name" value="AUXIN-RESPONSIVE PROTEIN SAUR32"/>
    <property type="match status" value="1"/>
</dbReference>
<dbReference type="Pfam" id="PF02519">
    <property type="entry name" value="Auxin_inducible"/>
    <property type="match status" value="1"/>
</dbReference>
<gene>
    <name evidence="2" type="primary">SAUR32</name>
    <name evidence="3" type="synonym">AAM1</name>
    <name evidence="5" type="ordered locus">At2g46690</name>
</gene>
<comment type="function">
    <text evidence="1">May play a role in the apical hook development (Ref.6).</text>
</comment>
<comment type="subcellular location">
    <subcellularLocation>
        <location evidence="1">Nucleus</location>
    </subcellularLocation>
    <subcellularLocation>
        <location evidence="1">Cytoplasm</location>
    </subcellularLocation>
    <text evidence="1">Primarily localized in the nucleus.</text>
</comment>
<comment type="tissue specificity">
    <text evidence="1">Expressed in roots, leaves and stems.</text>
</comment>
<comment type="developmental stage">
    <text evidence="1">During seedling growth expressed on the inner side of apical hook.</text>
</comment>
<comment type="disruption phenotype">
    <text evidence="1">No visible phenotype under normal growth conditions.</text>
</comment>
<comment type="miscellaneous">
    <text evidence="1">Seedlings over-expressing SAUR32 display reduced hypocotyl elongation and are defective in apical hook maintenance when grown in the dark.</text>
</comment>
<comment type="similarity">
    <text evidence="4">Belongs to the ARG7 family.</text>
</comment>
<protein>
    <recommendedName>
        <fullName evidence="4">Auxin-responsive protein SAUR32</fullName>
    </recommendedName>
    <alternativeName>
        <fullName evidence="3">Protein ABOLISHED APICAL HOOK MAINTENANCE 1</fullName>
    </alternativeName>
    <alternativeName>
        <fullName evidence="2">Protein SMALL AUXIN UP RNA 32</fullName>
    </alternativeName>
</protein>
<proteinExistence type="evidence at transcript level"/>
<feature type="chain" id="PRO_0000433067" description="Auxin-responsive protein SAUR32">
    <location>
        <begin position="1"/>
        <end position="121"/>
    </location>
</feature>
<organism>
    <name type="scientific">Arabidopsis thaliana</name>
    <name type="common">Mouse-ear cress</name>
    <dbReference type="NCBI Taxonomy" id="3702"/>
    <lineage>
        <taxon>Eukaryota</taxon>
        <taxon>Viridiplantae</taxon>
        <taxon>Streptophyta</taxon>
        <taxon>Embryophyta</taxon>
        <taxon>Tracheophyta</taxon>
        <taxon>Spermatophyta</taxon>
        <taxon>Magnoliopsida</taxon>
        <taxon>eudicotyledons</taxon>
        <taxon>Gunneridae</taxon>
        <taxon>Pentapetalae</taxon>
        <taxon>rosids</taxon>
        <taxon>malvids</taxon>
        <taxon>Brassicales</taxon>
        <taxon>Brassicaceae</taxon>
        <taxon>Camelineae</taxon>
        <taxon>Arabidopsis</taxon>
    </lineage>
</organism>
<name>SAU32_ARATH</name>
<accession>Q9ZUZ3</accession>
<keyword id="KW-0927">Auxin signaling pathway</keyword>
<keyword id="KW-0963">Cytoplasm</keyword>
<keyword id="KW-0217">Developmental protein</keyword>
<keyword id="KW-0341">Growth regulation</keyword>
<keyword id="KW-0539">Nucleus</keyword>
<keyword id="KW-1185">Reference proteome</keyword>
<evidence type="ECO:0000269" key="1">
    <source ref="6"/>
</evidence>
<evidence type="ECO:0000303" key="2">
    <source>
    </source>
</evidence>
<evidence type="ECO:0000303" key="3">
    <source ref="6"/>
</evidence>
<evidence type="ECO:0000305" key="4"/>
<evidence type="ECO:0000312" key="5">
    <source>
        <dbReference type="Araport" id="AT2G46690"/>
    </source>
</evidence>